<proteinExistence type="evidence at protein level"/>
<dbReference type="EMBL" id="AF145122">
    <property type="protein sequence ID" value="AAF70548.1"/>
    <property type="molecule type" value="mRNA"/>
</dbReference>
<dbReference type="EMBL" id="AB051491">
    <property type="protein sequence ID" value="BAB21795.1"/>
    <property type="status" value="ALT_INIT"/>
    <property type="molecule type" value="mRNA"/>
</dbReference>
<dbReference type="EMBL" id="AF245045">
    <property type="protein sequence ID" value="AAG44482.1"/>
    <property type="molecule type" value="mRNA"/>
</dbReference>
<dbReference type="EMBL" id="AK292493">
    <property type="protein sequence ID" value="BAF85182.1"/>
    <property type="molecule type" value="mRNA"/>
</dbReference>
<dbReference type="EMBL" id="AL359706">
    <property type="status" value="NOT_ANNOTATED_CDS"/>
    <property type="molecule type" value="Genomic_DNA"/>
</dbReference>
<dbReference type="EMBL" id="CH471075">
    <property type="protein sequence ID" value="EAX08720.1"/>
    <property type="molecule type" value="Genomic_DNA"/>
</dbReference>
<dbReference type="EMBL" id="BC017776">
    <property type="protein sequence ID" value="AAH17776.1"/>
    <property type="status" value="ALT_SEQ"/>
    <property type="molecule type" value="mRNA"/>
</dbReference>
<dbReference type="EMBL" id="BC032333">
    <property type="protein sequence ID" value="AAH32333.1"/>
    <property type="molecule type" value="mRNA"/>
</dbReference>
<dbReference type="EMBL" id="BC039586">
    <property type="protein sequence ID" value="AAH39586.1"/>
    <property type="molecule type" value="mRNA"/>
</dbReference>
<dbReference type="CCDS" id="CCDS9394.1">
    <molecule id="Q8IXQ4-1"/>
</dbReference>
<dbReference type="RefSeq" id="NP_001303880.1">
    <molecule id="Q8IXQ4-1"/>
    <property type="nucleotide sequence ID" value="NM_001316951.2"/>
</dbReference>
<dbReference type="RefSeq" id="NP_001303881.1">
    <property type="nucleotide sequence ID" value="NM_001316952.1"/>
</dbReference>
<dbReference type="RefSeq" id="NP_061029.2">
    <molecule id="Q8IXQ4-1"/>
    <property type="nucleotide sequence ID" value="NM_018559.3"/>
</dbReference>
<dbReference type="RefSeq" id="XP_005266501.1">
    <molecule id="Q8IXQ4-1"/>
    <property type="nucleotide sequence ID" value="XM_005266444.4"/>
</dbReference>
<dbReference type="RefSeq" id="XP_047286392.1">
    <molecule id="Q8IXQ4-1"/>
    <property type="nucleotide sequence ID" value="XM_047430436.1"/>
</dbReference>
<dbReference type="RefSeq" id="XP_047286393.1">
    <molecule id="Q8IXQ4-2"/>
    <property type="nucleotide sequence ID" value="XM_047430437.1"/>
</dbReference>
<dbReference type="SMR" id="Q8IXQ4"/>
<dbReference type="BioGRID" id="120665">
    <property type="interactions" value="78"/>
</dbReference>
<dbReference type="FunCoup" id="Q8IXQ4">
    <property type="interactions" value="3889"/>
</dbReference>
<dbReference type="IntAct" id="Q8IXQ4">
    <property type="interactions" value="41"/>
</dbReference>
<dbReference type="MINT" id="Q8IXQ4"/>
<dbReference type="STRING" id="9606.ENSP00000368447"/>
<dbReference type="GlyGen" id="Q8IXQ4">
    <property type="glycosylation" value="4 sites, 1 N-linked glycan (1 site), 1 O-linked glycan (3 sites)"/>
</dbReference>
<dbReference type="iPTMnet" id="Q8IXQ4"/>
<dbReference type="PhosphoSitePlus" id="Q8IXQ4"/>
<dbReference type="BioMuta" id="GPALPP1"/>
<dbReference type="DMDM" id="74728222"/>
<dbReference type="jPOST" id="Q8IXQ4"/>
<dbReference type="MassIVE" id="Q8IXQ4"/>
<dbReference type="PaxDb" id="9606-ENSP00000368447"/>
<dbReference type="PeptideAtlas" id="Q8IXQ4"/>
<dbReference type="ProteomicsDB" id="71037">
    <molecule id="Q8IXQ4-1"/>
</dbReference>
<dbReference type="ProteomicsDB" id="71038">
    <molecule id="Q8IXQ4-2"/>
</dbReference>
<dbReference type="ProteomicsDB" id="71039">
    <molecule id="Q8IXQ4-3"/>
</dbReference>
<dbReference type="ProteomicsDB" id="71040">
    <molecule id="Q8IXQ4-4"/>
</dbReference>
<dbReference type="Pumba" id="Q8IXQ4"/>
<dbReference type="Antibodypedia" id="42228">
    <property type="antibodies" value="39 antibodies from 12 providers"/>
</dbReference>
<dbReference type="DNASU" id="55425"/>
<dbReference type="Ensembl" id="ENST00000357537.4">
    <molecule id="Q8IXQ4-3"/>
    <property type="protein sequence ID" value="ENSP00000350145.3"/>
    <property type="gene ID" value="ENSG00000133114.18"/>
</dbReference>
<dbReference type="Ensembl" id="ENST00000379151.9">
    <molecule id="Q8IXQ4-1"/>
    <property type="protein sequence ID" value="ENSP00000368447.4"/>
    <property type="gene ID" value="ENSG00000133114.18"/>
</dbReference>
<dbReference type="Ensembl" id="ENST00000497558.5">
    <molecule id="Q8IXQ4-1"/>
    <property type="protein sequence ID" value="ENSP00000432500.1"/>
    <property type="gene ID" value="ENSG00000133114.18"/>
</dbReference>
<dbReference type="GeneID" id="55425"/>
<dbReference type="KEGG" id="hsa:55425"/>
<dbReference type="MANE-Select" id="ENST00000379151.9">
    <property type="protein sequence ID" value="ENSP00000368447.4"/>
    <property type="RefSeq nucleotide sequence ID" value="NM_018559.5"/>
    <property type="RefSeq protein sequence ID" value="NP_061029.2"/>
</dbReference>
<dbReference type="UCSC" id="uc001uzq.4">
    <molecule id="Q8IXQ4-1"/>
    <property type="organism name" value="human"/>
</dbReference>
<dbReference type="AGR" id="HGNC:20298"/>
<dbReference type="CTD" id="55425"/>
<dbReference type="DisGeNET" id="55425"/>
<dbReference type="GeneCards" id="GPALPP1"/>
<dbReference type="HGNC" id="HGNC:20298">
    <property type="gene designation" value="GPALPP1"/>
</dbReference>
<dbReference type="HPA" id="ENSG00000133114">
    <property type="expression patterns" value="Low tissue specificity"/>
</dbReference>
<dbReference type="neXtProt" id="NX_Q8IXQ4"/>
<dbReference type="OpenTargets" id="ENSG00000133114"/>
<dbReference type="PharmGKB" id="PA134943194"/>
<dbReference type="VEuPathDB" id="HostDB:ENSG00000133114"/>
<dbReference type="eggNOG" id="KOG4188">
    <property type="taxonomic scope" value="Eukaryota"/>
</dbReference>
<dbReference type="GeneTree" id="ENSGT00940000163575"/>
<dbReference type="HOGENOM" id="CLU_029231_0_1_1"/>
<dbReference type="InParanoid" id="Q8IXQ4"/>
<dbReference type="OMA" id="NKAADFG"/>
<dbReference type="OrthoDB" id="73491at2759"/>
<dbReference type="PAN-GO" id="Q8IXQ4">
    <property type="GO annotations" value="0 GO annotations based on evolutionary models"/>
</dbReference>
<dbReference type="PhylomeDB" id="Q8IXQ4"/>
<dbReference type="TreeFam" id="TF314389"/>
<dbReference type="PathwayCommons" id="Q8IXQ4"/>
<dbReference type="SignaLink" id="Q8IXQ4"/>
<dbReference type="BioGRID-ORCS" id="55425">
    <property type="hits" value="21 hits in 1148 CRISPR screens"/>
</dbReference>
<dbReference type="ChiTaRS" id="GPALPP1">
    <property type="organism name" value="human"/>
</dbReference>
<dbReference type="GeneWiki" id="KIAA1704"/>
<dbReference type="GenomeRNAi" id="55425"/>
<dbReference type="Pharos" id="Q8IXQ4">
    <property type="development level" value="Tdark"/>
</dbReference>
<dbReference type="PRO" id="PR:Q8IXQ4"/>
<dbReference type="Proteomes" id="UP000005640">
    <property type="component" value="Chromosome 13"/>
</dbReference>
<dbReference type="RNAct" id="Q8IXQ4">
    <property type="molecule type" value="protein"/>
</dbReference>
<dbReference type="Bgee" id="ENSG00000133114">
    <property type="expression patterns" value="Expressed in endothelial cell and 180 other cell types or tissues"/>
</dbReference>
<dbReference type="ExpressionAtlas" id="Q8IXQ4">
    <property type="expression patterns" value="baseline and differential"/>
</dbReference>
<dbReference type="InterPro" id="IPR022226">
    <property type="entry name" value="DUF3752"/>
</dbReference>
<dbReference type="InterPro" id="IPR046331">
    <property type="entry name" value="GPAM1-like"/>
</dbReference>
<dbReference type="PANTHER" id="PTHR46370">
    <property type="entry name" value="GPALPP MOTIFS-CONTAINING PROTEIN 1"/>
    <property type="match status" value="1"/>
</dbReference>
<dbReference type="PANTHER" id="PTHR46370:SF1">
    <property type="entry name" value="GPALPP MOTIFS-CONTAINING PROTEIN 1"/>
    <property type="match status" value="1"/>
</dbReference>
<dbReference type="Pfam" id="PF12572">
    <property type="entry name" value="DUF3752"/>
    <property type="match status" value="1"/>
</dbReference>
<evidence type="ECO:0000256" key="1">
    <source>
        <dbReference type="SAM" id="MobiDB-lite"/>
    </source>
</evidence>
<evidence type="ECO:0000303" key="2">
    <source>
    </source>
</evidence>
<evidence type="ECO:0000303" key="3">
    <source ref="1"/>
</evidence>
<evidence type="ECO:0000303" key="4">
    <source ref="3"/>
</evidence>
<evidence type="ECO:0000305" key="5"/>
<evidence type="ECO:0007744" key="6">
    <source>
    </source>
</evidence>
<evidence type="ECO:0007744" key="7">
    <source>
    </source>
</evidence>
<evidence type="ECO:0007744" key="8">
    <source>
    </source>
</evidence>
<evidence type="ECO:0007744" key="9">
    <source>
    </source>
</evidence>
<evidence type="ECO:0007744" key="10">
    <source>
    </source>
</evidence>
<evidence type="ECO:0007744" key="11">
    <source>
    </source>
</evidence>
<evidence type="ECO:0007744" key="12">
    <source>
    </source>
</evidence>
<name>GPAM1_HUMAN</name>
<feature type="initiator methionine" description="Removed" evidence="7">
    <location>
        <position position="1"/>
    </location>
</feature>
<feature type="chain" id="PRO_0000293714" description="GPALPP motifs-containing protein 1">
    <location>
        <begin position="2"/>
        <end position="340"/>
    </location>
</feature>
<feature type="region of interest" description="Disordered" evidence="1">
    <location>
        <begin position="1"/>
        <end position="304"/>
    </location>
</feature>
<feature type="short sequence motif" description="GPALPP motif 1">
    <location>
        <begin position="7"/>
        <end position="12"/>
    </location>
</feature>
<feature type="short sequence motif" description="GPALPP motif 2">
    <location>
        <begin position="32"/>
        <end position="37"/>
    </location>
</feature>
<feature type="short sequence motif" description="GPALPP motif 3">
    <location>
        <begin position="92"/>
        <end position="97"/>
    </location>
</feature>
<feature type="short sequence motif" description="GPALPP motif 4">
    <location>
        <begin position="112"/>
        <end position="117"/>
    </location>
</feature>
<feature type="compositionally biased region" description="Acidic residues" evidence="1">
    <location>
        <begin position="60"/>
        <end position="69"/>
    </location>
</feature>
<feature type="compositionally biased region" description="Pro residues" evidence="1">
    <location>
        <begin position="107"/>
        <end position="116"/>
    </location>
</feature>
<feature type="compositionally biased region" description="Basic and acidic residues" evidence="1">
    <location>
        <begin position="124"/>
        <end position="133"/>
    </location>
</feature>
<feature type="compositionally biased region" description="Basic and acidic residues" evidence="1">
    <location>
        <begin position="163"/>
        <end position="187"/>
    </location>
</feature>
<feature type="compositionally biased region" description="Basic and acidic residues" evidence="1">
    <location>
        <begin position="227"/>
        <end position="261"/>
    </location>
</feature>
<feature type="compositionally biased region" description="Basic and acidic residues" evidence="1">
    <location>
        <begin position="269"/>
        <end position="279"/>
    </location>
</feature>
<feature type="compositionally biased region" description="Basic and acidic residues" evidence="1">
    <location>
        <begin position="287"/>
        <end position="304"/>
    </location>
</feature>
<feature type="modified residue" description="N-acetylalanine" evidence="7">
    <location>
        <position position="2"/>
    </location>
</feature>
<feature type="modified residue" description="Phosphoserine" evidence="11">
    <location>
        <position position="28"/>
    </location>
</feature>
<feature type="modified residue" description="Phosphoserine" evidence="6 8 9 10 11">
    <location>
        <position position="105"/>
    </location>
</feature>
<feature type="modified residue" description="Phosphothreonine" evidence="6 8">
    <location>
        <position position="138"/>
    </location>
</feature>
<feature type="modified residue" description="Phosphoserine" evidence="6">
    <location>
        <position position="140"/>
    </location>
</feature>
<feature type="modified residue" description="Phosphoserine" evidence="6">
    <location>
        <position position="141"/>
    </location>
</feature>
<feature type="cross-link" description="Glycyl lysine isopeptide (Lys-Gly) (interchain with G-Cter in SUMO2)" evidence="12">
    <location>
        <position position="271"/>
    </location>
</feature>
<feature type="cross-link" description="Glycyl lysine isopeptide (Lys-Gly) (interchain with G-Cter in SUMO2)" evidence="12">
    <location>
        <position position="308"/>
    </location>
</feature>
<feature type="splice variant" id="VSP_026567" description="In isoform 3." evidence="3">
    <location>
        <begin position="1"/>
        <end position="170"/>
    </location>
</feature>
<feature type="splice variant" id="VSP_026568" description="In isoform 2." evidence="4">
    <location>
        <begin position="1"/>
        <end position="149"/>
    </location>
</feature>
<feature type="splice variant" id="VSP_026569" description="In isoform 4." evidence="2">
    <original>ETDSSEDEDIIGPMPAKGPVNYNVTTEFEKRAQRMKEKL</original>
    <variation>VSSSHFNSKVWKVFIERIRCIVTNSKLYACSYYNHWTQL</variation>
    <location>
        <begin position="137"/>
        <end position="175"/>
    </location>
</feature>
<feature type="splice variant" id="VSP_026570" description="In isoform 4." evidence="2">
    <location>
        <begin position="176"/>
        <end position="340"/>
    </location>
</feature>
<feature type="sequence conflict" description="In Ref. 7; AAH32333." evidence="5" ref="7">
    <original>S</original>
    <variation>I</variation>
    <location>
        <position position="126"/>
    </location>
</feature>
<feature type="sequence conflict" description="In Ref. 1; AAF70548." evidence="5" ref="1">
    <original>E</original>
    <variation>K</variation>
    <location>
        <position position="194"/>
    </location>
</feature>
<feature type="sequence conflict" description="In Ref. 1; AAF70548." evidence="5" ref="1">
    <original>R</original>
    <variation>G</variation>
    <location>
        <position position="212"/>
    </location>
</feature>
<feature type="sequence conflict" description="In Ref. 1; AAF70548." evidence="5" ref="1">
    <original>K</original>
    <variation>E</variation>
    <location>
        <position position="242"/>
    </location>
</feature>
<feature type="sequence conflict" description="In Ref. 7; AAH17776." evidence="5" ref="7">
    <original>H</original>
    <variation>Q</variation>
    <location>
        <position position="280"/>
    </location>
</feature>
<feature type="sequence conflict" description="In Ref. 7; AAH39586." evidence="5" ref="7">
    <original>P</original>
    <variation>L</variation>
    <location>
        <position position="295"/>
    </location>
</feature>
<keyword id="KW-0007">Acetylation</keyword>
<keyword id="KW-0025">Alternative splicing</keyword>
<keyword id="KW-1017">Isopeptide bond</keyword>
<keyword id="KW-0597">Phosphoprotein</keyword>
<keyword id="KW-1267">Proteomics identification</keyword>
<keyword id="KW-1185">Reference proteome</keyword>
<keyword id="KW-0832">Ubl conjugation</keyword>
<gene>
    <name type="primary">GPALPP1</name>
    <name type="synonym">KIAA1704</name>
    <name type="synonym">LSR7</name>
    <name type="ORF">AD029</name>
</gene>
<protein>
    <recommendedName>
        <fullName>GPALPP motifs-containing protein 1</fullName>
    </recommendedName>
    <alternativeName>
        <fullName>Lipopolysaccharide-specific response protein 7</fullName>
    </alternativeName>
</protein>
<sequence length="340" mass="38142">MARDLIGPALPPGFKARGTAEDEERDPSPVAGPALPPNYKSSSSDSSDSDEDSSSLYEEGNQESEEDDSGPTARKQRKNQDDDDDDDDGFFGPALPPGFKKQDDSPPRPIIGPALPPGFIKSTQKSDKGRDDPGQQETDSSEDEDIIGPMPAKGPVNYNVTTEFEKRAQRMKEKLTKGDDDSSKPIVRESWMTELPPEMKDFGLGPRTFKRRADDTSGDRSIWTDTPADRERKAKETQEARKSSSKKDEEHILSGRDKRLAEQVSSYNESKRSESLMDIHHKKLKSKAAEDKNKPQERIPFDRDKDLKVNRFDEAQKKALIKKSRELNTRFSHGKGNMFL</sequence>
<organism>
    <name type="scientific">Homo sapiens</name>
    <name type="common">Human</name>
    <dbReference type="NCBI Taxonomy" id="9606"/>
    <lineage>
        <taxon>Eukaryota</taxon>
        <taxon>Metazoa</taxon>
        <taxon>Chordata</taxon>
        <taxon>Craniata</taxon>
        <taxon>Vertebrata</taxon>
        <taxon>Euteleostomi</taxon>
        <taxon>Mammalia</taxon>
        <taxon>Eutheria</taxon>
        <taxon>Euarchontoglires</taxon>
        <taxon>Primates</taxon>
        <taxon>Haplorrhini</taxon>
        <taxon>Catarrhini</taxon>
        <taxon>Hominidae</taxon>
        <taxon>Homo</taxon>
    </lineage>
</organism>
<accession>Q8IXQ4</accession>
<accession>A8K8X8</accession>
<accession>Q05BX8</accession>
<accession>Q05D87</accession>
<accession>Q5T3Z3</accession>
<accession>Q5T3Z5</accession>
<accession>Q9C0F9</accession>
<accession>Q9H2R0</accession>
<accession>Q9P0W6</accession>
<reference key="1">
    <citation type="submission" date="1999-04" db="EMBL/GenBank/DDBJ databases">
        <title>New gene from human dental pulp cells.</title>
        <authorList>
            <person name="Chai Y.B."/>
            <person name="Zhao Z.L."/>
            <person name="Zhu F."/>
            <person name="Yan W."/>
            <person name="Chen N.C."/>
            <person name="Wang Q."/>
            <person name="Yue L."/>
            <person name="Chen S.M."/>
        </authorList>
    </citation>
    <scope>NUCLEOTIDE SEQUENCE [MRNA] (ISOFORM 3)</scope>
</reference>
<reference key="2">
    <citation type="journal article" date="2000" name="DNA Res.">
        <title>Prediction of the coding sequences of unidentified human genes. XIX. The complete sequences of 100 new cDNA clones from brain which code for large proteins in vitro.</title>
        <authorList>
            <person name="Nagase T."/>
            <person name="Kikuno R."/>
            <person name="Hattori A."/>
            <person name="Kondo Y."/>
            <person name="Okumura K."/>
            <person name="Ohara O."/>
        </authorList>
    </citation>
    <scope>NUCLEOTIDE SEQUENCE [LARGE SCALE MRNA] (ISOFORM 1)</scope>
    <source>
        <tissue>Brain</tissue>
    </source>
</reference>
<reference key="3">
    <citation type="submission" date="2000-03" db="EMBL/GenBank/DDBJ databases">
        <authorList>
            <person name="Song H."/>
            <person name="Gao G."/>
            <person name="Peng Y."/>
            <person name="Ren S."/>
            <person name="Chen Z."/>
            <person name="Han Z."/>
        </authorList>
    </citation>
    <scope>NUCLEOTIDE SEQUENCE [LARGE SCALE MRNA] (ISOFORM 2)</scope>
    <source>
        <tissue>Adrenal gland</tissue>
    </source>
</reference>
<reference key="4">
    <citation type="journal article" date="2004" name="Nat. Genet.">
        <title>Complete sequencing and characterization of 21,243 full-length human cDNAs.</title>
        <authorList>
            <person name="Ota T."/>
            <person name="Suzuki Y."/>
            <person name="Nishikawa T."/>
            <person name="Otsuki T."/>
            <person name="Sugiyama T."/>
            <person name="Irie R."/>
            <person name="Wakamatsu A."/>
            <person name="Hayashi K."/>
            <person name="Sato H."/>
            <person name="Nagai K."/>
            <person name="Kimura K."/>
            <person name="Makita H."/>
            <person name="Sekine M."/>
            <person name="Obayashi M."/>
            <person name="Nishi T."/>
            <person name="Shibahara T."/>
            <person name="Tanaka T."/>
            <person name="Ishii S."/>
            <person name="Yamamoto J."/>
            <person name="Saito K."/>
            <person name="Kawai Y."/>
            <person name="Isono Y."/>
            <person name="Nakamura Y."/>
            <person name="Nagahari K."/>
            <person name="Murakami K."/>
            <person name="Yasuda T."/>
            <person name="Iwayanagi T."/>
            <person name="Wagatsuma M."/>
            <person name="Shiratori A."/>
            <person name="Sudo H."/>
            <person name="Hosoiri T."/>
            <person name="Kaku Y."/>
            <person name="Kodaira H."/>
            <person name="Kondo H."/>
            <person name="Sugawara M."/>
            <person name="Takahashi M."/>
            <person name="Kanda K."/>
            <person name="Yokoi T."/>
            <person name="Furuya T."/>
            <person name="Kikkawa E."/>
            <person name="Omura Y."/>
            <person name="Abe K."/>
            <person name="Kamihara K."/>
            <person name="Katsuta N."/>
            <person name="Sato K."/>
            <person name="Tanikawa M."/>
            <person name="Yamazaki M."/>
            <person name="Ninomiya K."/>
            <person name="Ishibashi T."/>
            <person name="Yamashita H."/>
            <person name="Murakawa K."/>
            <person name="Fujimori K."/>
            <person name="Tanai H."/>
            <person name="Kimata M."/>
            <person name="Watanabe M."/>
            <person name="Hiraoka S."/>
            <person name="Chiba Y."/>
            <person name="Ishida S."/>
            <person name="Ono Y."/>
            <person name="Takiguchi S."/>
            <person name="Watanabe S."/>
            <person name="Yosida M."/>
            <person name="Hotuta T."/>
            <person name="Kusano J."/>
            <person name="Kanehori K."/>
            <person name="Takahashi-Fujii A."/>
            <person name="Hara H."/>
            <person name="Tanase T.-O."/>
            <person name="Nomura Y."/>
            <person name="Togiya S."/>
            <person name="Komai F."/>
            <person name="Hara R."/>
            <person name="Takeuchi K."/>
            <person name="Arita M."/>
            <person name="Imose N."/>
            <person name="Musashino K."/>
            <person name="Yuuki H."/>
            <person name="Oshima A."/>
            <person name="Sasaki N."/>
            <person name="Aotsuka S."/>
            <person name="Yoshikawa Y."/>
            <person name="Matsunawa H."/>
            <person name="Ichihara T."/>
            <person name="Shiohata N."/>
            <person name="Sano S."/>
            <person name="Moriya S."/>
            <person name="Momiyama H."/>
            <person name="Satoh N."/>
            <person name="Takami S."/>
            <person name="Terashima Y."/>
            <person name="Suzuki O."/>
            <person name="Nakagawa S."/>
            <person name="Senoh A."/>
            <person name="Mizoguchi H."/>
            <person name="Goto Y."/>
            <person name="Shimizu F."/>
            <person name="Wakebe H."/>
            <person name="Hishigaki H."/>
            <person name="Watanabe T."/>
            <person name="Sugiyama A."/>
            <person name="Takemoto M."/>
            <person name="Kawakami B."/>
            <person name="Yamazaki M."/>
            <person name="Watanabe K."/>
            <person name="Kumagai A."/>
            <person name="Itakura S."/>
            <person name="Fukuzumi Y."/>
            <person name="Fujimori Y."/>
            <person name="Komiyama M."/>
            <person name="Tashiro H."/>
            <person name="Tanigami A."/>
            <person name="Fujiwara T."/>
            <person name="Ono T."/>
            <person name="Yamada K."/>
            <person name="Fujii Y."/>
            <person name="Ozaki K."/>
            <person name="Hirao M."/>
            <person name="Ohmori Y."/>
            <person name="Kawabata A."/>
            <person name="Hikiji T."/>
            <person name="Kobatake N."/>
            <person name="Inagaki H."/>
            <person name="Ikema Y."/>
            <person name="Okamoto S."/>
            <person name="Okitani R."/>
            <person name="Kawakami T."/>
            <person name="Noguchi S."/>
            <person name="Itoh T."/>
            <person name="Shigeta K."/>
            <person name="Senba T."/>
            <person name="Matsumura K."/>
            <person name="Nakajima Y."/>
            <person name="Mizuno T."/>
            <person name="Morinaga M."/>
            <person name="Sasaki M."/>
            <person name="Togashi T."/>
            <person name="Oyama M."/>
            <person name="Hata H."/>
            <person name="Watanabe M."/>
            <person name="Komatsu T."/>
            <person name="Mizushima-Sugano J."/>
            <person name="Satoh T."/>
            <person name="Shirai Y."/>
            <person name="Takahashi Y."/>
            <person name="Nakagawa K."/>
            <person name="Okumura K."/>
            <person name="Nagase T."/>
            <person name="Nomura N."/>
            <person name="Kikuchi H."/>
            <person name="Masuho Y."/>
            <person name="Yamashita R."/>
            <person name="Nakai K."/>
            <person name="Yada T."/>
            <person name="Nakamura Y."/>
            <person name="Ohara O."/>
            <person name="Isogai T."/>
            <person name="Sugano S."/>
        </authorList>
    </citation>
    <scope>NUCLEOTIDE SEQUENCE [LARGE SCALE MRNA] (ISOFORM 1)</scope>
    <source>
        <tissue>Testis</tissue>
    </source>
</reference>
<reference key="5">
    <citation type="journal article" date="2004" name="Nature">
        <title>The DNA sequence and analysis of human chromosome 13.</title>
        <authorList>
            <person name="Dunham A."/>
            <person name="Matthews L.H."/>
            <person name="Burton J."/>
            <person name="Ashurst J.L."/>
            <person name="Howe K.L."/>
            <person name="Ashcroft K.J."/>
            <person name="Beare D.M."/>
            <person name="Burford D.C."/>
            <person name="Hunt S.E."/>
            <person name="Griffiths-Jones S."/>
            <person name="Jones M.C."/>
            <person name="Keenan S.J."/>
            <person name="Oliver K."/>
            <person name="Scott C.E."/>
            <person name="Ainscough R."/>
            <person name="Almeida J.P."/>
            <person name="Ambrose K.D."/>
            <person name="Andrews D.T."/>
            <person name="Ashwell R.I.S."/>
            <person name="Babbage A.K."/>
            <person name="Bagguley C.L."/>
            <person name="Bailey J."/>
            <person name="Bannerjee R."/>
            <person name="Barlow K.F."/>
            <person name="Bates K."/>
            <person name="Beasley H."/>
            <person name="Bird C.P."/>
            <person name="Bray-Allen S."/>
            <person name="Brown A.J."/>
            <person name="Brown J.Y."/>
            <person name="Burrill W."/>
            <person name="Carder C."/>
            <person name="Carter N.P."/>
            <person name="Chapman J.C."/>
            <person name="Clamp M.E."/>
            <person name="Clark S.Y."/>
            <person name="Clarke G."/>
            <person name="Clee C.M."/>
            <person name="Clegg S.C."/>
            <person name="Cobley V."/>
            <person name="Collins J.E."/>
            <person name="Corby N."/>
            <person name="Coville G.J."/>
            <person name="Deloukas P."/>
            <person name="Dhami P."/>
            <person name="Dunham I."/>
            <person name="Dunn M."/>
            <person name="Earthrowl M.E."/>
            <person name="Ellington A.G."/>
            <person name="Faulkner L."/>
            <person name="Frankish A.G."/>
            <person name="Frankland J."/>
            <person name="French L."/>
            <person name="Garner P."/>
            <person name="Garnett J."/>
            <person name="Gilbert J.G.R."/>
            <person name="Gilson C.J."/>
            <person name="Ghori J."/>
            <person name="Grafham D.V."/>
            <person name="Gribble S.M."/>
            <person name="Griffiths C."/>
            <person name="Hall R.E."/>
            <person name="Hammond S."/>
            <person name="Harley J.L."/>
            <person name="Hart E.A."/>
            <person name="Heath P.D."/>
            <person name="Howden P.J."/>
            <person name="Huckle E.J."/>
            <person name="Hunt P.J."/>
            <person name="Hunt A.R."/>
            <person name="Johnson C."/>
            <person name="Johnson D."/>
            <person name="Kay M."/>
            <person name="Kimberley A.M."/>
            <person name="King A."/>
            <person name="Laird G.K."/>
            <person name="Langford C.J."/>
            <person name="Lawlor S."/>
            <person name="Leongamornlert D.A."/>
            <person name="Lloyd D.M."/>
            <person name="Lloyd C."/>
            <person name="Loveland J.E."/>
            <person name="Lovell J."/>
            <person name="Martin S."/>
            <person name="Mashreghi-Mohammadi M."/>
            <person name="McLaren S.J."/>
            <person name="McMurray A."/>
            <person name="Milne S."/>
            <person name="Moore M.J.F."/>
            <person name="Nickerson T."/>
            <person name="Palmer S.A."/>
            <person name="Pearce A.V."/>
            <person name="Peck A.I."/>
            <person name="Pelan S."/>
            <person name="Phillimore B."/>
            <person name="Porter K.M."/>
            <person name="Rice C.M."/>
            <person name="Searle S."/>
            <person name="Sehra H.K."/>
            <person name="Shownkeen R."/>
            <person name="Skuce C.D."/>
            <person name="Smith M."/>
            <person name="Steward C.A."/>
            <person name="Sycamore N."/>
            <person name="Tester J."/>
            <person name="Thomas D.W."/>
            <person name="Tracey A."/>
            <person name="Tromans A."/>
            <person name="Tubby B."/>
            <person name="Wall M."/>
            <person name="Wallis J.M."/>
            <person name="West A.P."/>
            <person name="Whitehead S.L."/>
            <person name="Willey D.L."/>
            <person name="Wilming L."/>
            <person name="Wray P.W."/>
            <person name="Wright M.W."/>
            <person name="Young L."/>
            <person name="Coulson A."/>
            <person name="Durbin R.M."/>
            <person name="Hubbard T."/>
            <person name="Sulston J.E."/>
            <person name="Beck S."/>
            <person name="Bentley D.R."/>
            <person name="Rogers J."/>
            <person name="Ross M.T."/>
        </authorList>
    </citation>
    <scope>NUCLEOTIDE SEQUENCE [LARGE SCALE GENOMIC DNA]</scope>
</reference>
<reference key="6">
    <citation type="submission" date="2005-07" db="EMBL/GenBank/DDBJ databases">
        <authorList>
            <person name="Mural R.J."/>
            <person name="Istrail S."/>
            <person name="Sutton G.G."/>
            <person name="Florea L."/>
            <person name="Halpern A.L."/>
            <person name="Mobarry C.M."/>
            <person name="Lippert R."/>
            <person name="Walenz B."/>
            <person name="Shatkay H."/>
            <person name="Dew I."/>
            <person name="Miller J.R."/>
            <person name="Flanigan M.J."/>
            <person name="Edwards N.J."/>
            <person name="Bolanos R."/>
            <person name="Fasulo D."/>
            <person name="Halldorsson B.V."/>
            <person name="Hannenhalli S."/>
            <person name="Turner R."/>
            <person name="Yooseph S."/>
            <person name="Lu F."/>
            <person name="Nusskern D.R."/>
            <person name="Shue B.C."/>
            <person name="Zheng X.H."/>
            <person name="Zhong F."/>
            <person name="Delcher A.L."/>
            <person name="Huson D.H."/>
            <person name="Kravitz S.A."/>
            <person name="Mouchard L."/>
            <person name="Reinert K."/>
            <person name="Remington K.A."/>
            <person name="Clark A.G."/>
            <person name="Waterman M.S."/>
            <person name="Eichler E.E."/>
            <person name="Adams M.D."/>
            <person name="Hunkapiller M.W."/>
            <person name="Myers E.W."/>
            <person name="Venter J.C."/>
        </authorList>
    </citation>
    <scope>NUCLEOTIDE SEQUENCE [LARGE SCALE GENOMIC DNA]</scope>
</reference>
<reference key="7">
    <citation type="journal article" date="2004" name="Genome Res.">
        <title>The status, quality, and expansion of the NIH full-length cDNA project: the Mammalian Gene Collection (MGC).</title>
        <authorList>
            <consortium name="The MGC Project Team"/>
        </authorList>
    </citation>
    <scope>NUCLEOTIDE SEQUENCE [LARGE SCALE MRNA] (ISOFORMS 1 AND 4)</scope>
    <source>
        <tissue>Brain</tissue>
        <tissue>Ovary</tissue>
        <tissue>Testis</tissue>
    </source>
</reference>
<reference key="8">
    <citation type="journal article" date="2006" name="Cell">
        <title>Global, in vivo, and site-specific phosphorylation dynamics in signaling networks.</title>
        <authorList>
            <person name="Olsen J.V."/>
            <person name="Blagoev B."/>
            <person name="Gnad F."/>
            <person name="Macek B."/>
            <person name="Kumar C."/>
            <person name="Mortensen P."/>
            <person name="Mann M."/>
        </authorList>
    </citation>
    <scope>PHOSPHORYLATION [LARGE SCALE ANALYSIS] AT SER-105; THR-138; SER-140 AND SER-141</scope>
    <scope>IDENTIFICATION BY MASS SPECTROMETRY [LARGE SCALE ANALYSIS]</scope>
    <source>
        <tissue>Cervix carcinoma</tissue>
    </source>
</reference>
<reference key="9">
    <citation type="journal article" date="2008" name="Proc. Natl. Acad. Sci. U.S.A.">
        <title>A quantitative atlas of mitotic phosphorylation.</title>
        <authorList>
            <person name="Dephoure N."/>
            <person name="Zhou C."/>
            <person name="Villen J."/>
            <person name="Beausoleil S.A."/>
            <person name="Bakalarski C.E."/>
            <person name="Elledge S.J."/>
            <person name="Gygi S.P."/>
        </authorList>
    </citation>
    <scope>IDENTIFICATION BY MASS SPECTROMETRY [LARGE SCALE ANALYSIS]</scope>
    <source>
        <tissue>Cervix carcinoma</tissue>
    </source>
</reference>
<reference key="10">
    <citation type="journal article" date="2009" name="Anal. Chem.">
        <title>Lys-N and trypsin cover complementary parts of the phosphoproteome in a refined SCX-based approach.</title>
        <authorList>
            <person name="Gauci S."/>
            <person name="Helbig A.O."/>
            <person name="Slijper M."/>
            <person name="Krijgsveld J."/>
            <person name="Heck A.J."/>
            <person name="Mohammed S."/>
        </authorList>
    </citation>
    <scope>ACETYLATION [LARGE SCALE ANALYSIS] AT ALA-2</scope>
    <scope>CLEAVAGE OF INITIATOR METHIONINE [LARGE SCALE ANALYSIS]</scope>
    <scope>IDENTIFICATION BY MASS SPECTROMETRY [LARGE SCALE ANALYSIS]</scope>
</reference>
<reference key="11">
    <citation type="journal article" date="2009" name="Sci. Signal.">
        <title>Quantitative phosphoproteomic analysis of T cell receptor signaling reveals system-wide modulation of protein-protein interactions.</title>
        <authorList>
            <person name="Mayya V."/>
            <person name="Lundgren D.H."/>
            <person name="Hwang S.-I."/>
            <person name="Rezaul K."/>
            <person name="Wu L."/>
            <person name="Eng J.K."/>
            <person name="Rodionov V."/>
            <person name="Han D.K."/>
        </authorList>
    </citation>
    <scope>PHOSPHORYLATION [LARGE SCALE ANALYSIS] AT SER-105 AND THR-138</scope>
    <scope>IDENTIFICATION BY MASS SPECTROMETRY [LARGE SCALE ANALYSIS]</scope>
    <source>
        <tissue>Leukemic T-cell</tissue>
    </source>
</reference>
<reference key="12">
    <citation type="journal article" date="2011" name="Sci. Signal.">
        <title>System-wide temporal characterization of the proteome and phosphoproteome of human embryonic stem cell differentiation.</title>
        <authorList>
            <person name="Rigbolt K.T."/>
            <person name="Prokhorova T.A."/>
            <person name="Akimov V."/>
            <person name="Henningsen J."/>
            <person name="Johansen P.T."/>
            <person name="Kratchmarova I."/>
            <person name="Kassem M."/>
            <person name="Mann M."/>
            <person name="Olsen J.V."/>
            <person name="Blagoev B."/>
        </authorList>
    </citation>
    <scope>PHOSPHORYLATION [LARGE SCALE ANALYSIS] AT SER-105</scope>
    <scope>IDENTIFICATION BY MASS SPECTROMETRY [LARGE SCALE ANALYSIS]</scope>
</reference>
<reference key="13">
    <citation type="journal article" date="2013" name="J. Proteome Res.">
        <title>Toward a comprehensive characterization of a human cancer cell phosphoproteome.</title>
        <authorList>
            <person name="Zhou H."/>
            <person name="Di Palma S."/>
            <person name="Preisinger C."/>
            <person name="Peng M."/>
            <person name="Polat A.N."/>
            <person name="Heck A.J."/>
            <person name="Mohammed S."/>
        </authorList>
    </citation>
    <scope>PHOSPHORYLATION [LARGE SCALE ANALYSIS] AT SER-105</scope>
    <scope>IDENTIFICATION BY MASS SPECTROMETRY [LARGE SCALE ANALYSIS]</scope>
    <source>
        <tissue>Cervix carcinoma</tissue>
        <tissue>Erythroleukemia</tissue>
    </source>
</reference>
<reference key="14">
    <citation type="journal article" date="2014" name="J. Proteomics">
        <title>An enzyme assisted RP-RPLC approach for in-depth analysis of human liver phosphoproteome.</title>
        <authorList>
            <person name="Bian Y."/>
            <person name="Song C."/>
            <person name="Cheng K."/>
            <person name="Dong M."/>
            <person name="Wang F."/>
            <person name="Huang J."/>
            <person name="Sun D."/>
            <person name="Wang L."/>
            <person name="Ye M."/>
            <person name="Zou H."/>
        </authorList>
    </citation>
    <scope>PHOSPHORYLATION [LARGE SCALE ANALYSIS] AT SER-28 AND SER-105</scope>
    <scope>IDENTIFICATION BY MASS SPECTROMETRY [LARGE SCALE ANALYSIS]</scope>
    <source>
        <tissue>Liver</tissue>
    </source>
</reference>
<reference key="15">
    <citation type="journal article" date="2017" name="Nat. Struct. Mol. Biol.">
        <title>Site-specific mapping of the human SUMO proteome reveals co-modification with phosphorylation.</title>
        <authorList>
            <person name="Hendriks I.A."/>
            <person name="Lyon D."/>
            <person name="Young C."/>
            <person name="Jensen L.J."/>
            <person name="Vertegaal A.C."/>
            <person name="Nielsen M.L."/>
        </authorList>
    </citation>
    <scope>SUMOYLATION [LARGE SCALE ANALYSIS] AT LYS-271 AND LYS-308</scope>
    <scope>IDENTIFICATION BY MASS SPECTROMETRY [LARGE SCALE ANALYSIS]</scope>
</reference>
<comment type="alternative products">
    <event type="alternative splicing"/>
    <isoform>
        <id>Q8IXQ4-1</id>
        <name>1</name>
        <sequence type="displayed"/>
    </isoform>
    <isoform>
        <id>Q8IXQ4-2</id>
        <name>2</name>
        <sequence type="described" ref="VSP_026568"/>
    </isoform>
    <isoform>
        <id>Q8IXQ4-3</id>
        <name>3</name>
        <sequence type="described" ref="VSP_026567"/>
    </isoform>
    <isoform>
        <id>Q8IXQ4-4</id>
        <name>4</name>
        <sequence type="described" ref="VSP_026569 VSP_026570"/>
    </isoform>
</comment>
<comment type="sequence caution" evidence="5">
    <conflict type="miscellaneous discrepancy">
        <sequence resource="EMBL-CDS" id="AAH17776"/>
    </conflict>
    <text>Contaminating sequence. Potential poly-A sequence.</text>
</comment>
<comment type="sequence caution" evidence="5">
    <conflict type="erroneous initiation">
        <sequence resource="EMBL-CDS" id="BAB21795"/>
    </conflict>
    <text>Extended N-terminus.</text>
</comment>